<evidence type="ECO:0000255" key="1">
    <source>
        <dbReference type="HAMAP-Rule" id="MF_01363"/>
    </source>
</evidence>
<evidence type="ECO:0000305" key="2"/>
<protein>
    <recommendedName>
        <fullName evidence="1">Large ribosomal subunit protein bL21</fullName>
    </recommendedName>
    <alternativeName>
        <fullName evidence="2">50S ribosomal protein L21</fullName>
    </alternativeName>
</protein>
<sequence length="105" mass="11343">MFAVIKTGGKQYRVAANDVLTIEKLEASAGDSIEFTEVLVIGEGADAAIGAPFVAGASVKAEVVDQTRGKKVIAFKKRRRQNSKRSRGHRQHHTVVRITDIVAAK</sequence>
<organism>
    <name type="scientific">Rhizobium etli (strain ATCC 51251 / DSM 11541 / JCM 21823 / NBRC 15573 / CFN 42)</name>
    <dbReference type="NCBI Taxonomy" id="347834"/>
    <lineage>
        <taxon>Bacteria</taxon>
        <taxon>Pseudomonadati</taxon>
        <taxon>Pseudomonadota</taxon>
        <taxon>Alphaproteobacteria</taxon>
        <taxon>Hyphomicrobiales</taxon>
        <taxon>Rhizobiaceae</taxon>
        <taxon>Rhizobium/Agrobacterium group</taxon>
        <taxon>Rhizobium</taxon>
    </lineage>
</organism>
<feature type="chain" id="PRO_0000270716" description="Large ribosomal subunit protein bL21">
    <location>
        <begin position="1"/>
        <end position="105"/>
    </location>
</feature>
<accession>Q2K2Y1</accession>
<proteinExistence type="inferred from homology"/>
<reference key="1">
    <citation type="journal article" date="2006" name="Proc. Natl. Acad. Sci. U.S.A.">
        <title>The partitioned Rhizobium etli genome: genetic and metabolic redundancy in seven interacting replicons.</title>
        <authorList>
            <person name="Gonzalez V."/>
            <person name="Santamaria R.I."/>
            <person name="Bustos P."/>
            <person name="Hernandez-Gonzalez I."/>
            <person name="Medrano-Soto A."/>
            <person name="Moreno-Hagelsieb G."/>
            <person name="Janga S.C."/>
            <person name="Ramirez M.A."/>
            <person name="Jimenez-Jacinto V."/>
            <person name="Collado-Vides J."/>
            <person name="Davila G."/>
        </authorList>
    </citation>
    <scope>NUCLEOTIDE SEQUENCE [LARGE SCALE GENOMIC DNA]</scope>
    <source>
        <strain>ATCC 51251 / DSM 11541 / JCM 21823 / NBRC 15573 / CFN 42</strain>
    </source>
</reference>
<gene>
    <name evidence="1" type="primary">rplU</name>
    <name type="ordered locus">RHE_CH04062</name>
</gene>
<comment type="function">
    <text evidence="1">This protein binds to 23S rRNA in the presence of protein L20.</text>
</comment>
<comment type="subunit">
    <text evidence="1">Part of the 50S ribosomal subunit. Contacts protein L20.</text>
</comment>
<comment type="similarity">
    <text evidence="1">Belongs to the bacterial ribosomal protein bL21 family.</text>
</comment>
<keyword id="KW-1185">Reference proteome</keyword>
<keyword id="KW-0687">Ribonucleoprotein</keyword>
<keyword id="KW-0689">Ribosomal protein</keyword>
<keyword id="KW-0694">RNA-binding</keyword>
<keyword id="KW-0699">rRNA-binding</keyword>
<name>RL21_RHIEC</name>
<dbReference type="EMBL" id="CP000133">
    <property type="protein sequence ID" value="ABC92805.1"/>
    <property type="molecule type" value="Genomic_DNA"/>
</dbReference>
<dbReference type="RefSeq" id="WP_007824851.1">
    <property type="nucleotide sequence ID" value="NC_007761.1"/>
</dbReference>
<dbReference type="SMR" id="Q2K2Y1"/>
<dbReference type="GeneID" id="66139636"/>
<dbReference type="KEGG" id="ret:RHE_CH04062"/>
<dbReference type="eggNOG" id="COG0261">
    <property type="taxonomic scope" value="Bacteria"/>
</dbReference>
<dbReference type="HOGENOM" id="CLU_061463_3_2_5"/>
<dbReference type="OrthoDB" id="9813334at2"/>
<dbReference type="Proteomes" id="UP000001936">
    <property type="component" value="Chromosome"/>
</dbReference>
<dbReference type="GO" id="GO:0005737">
    <property type="term" value="C:cytoplasm"/>
    <property type="evidence" value="ECO:0007669"/>
    <property type="project" value="UniProtKB-ARBA"/>
</dbReference>
<dbReference type="GO" id="GO:1990904">
    <property type="term" value="C:ribonucleoprotein complex"/>
    <property type="evidence" value="ECO:0007669"/>
    <property type="project" value="UniProtKB-KW"/>
</dbReference>
<dbReference type="GO" id="GO:0005840">
    <property type="term" value="C:ribosome"/>
    <property type="evidence" value="ECO:0007669"/>
    <property type="project" value="UniProtKB-KW"/>
</dbReference>
<dbReference type="GO" id="GO:0019843">
    <property type="term" value="F:rRNA binding"/>
    <property type="evidence" value="ECO:0007669"/>
    <property type="project" value="UniProtKB-UniRule"/>
</dbReference>
<dbReference type="GO" id="GO:0003735">
    <property type="term" value="F:structural constituent of ribosome"/>
    <property type="evidence" value="ECO:0007669"/>
    <property type="project" value="InterPro"/>
</dbReference>
<dbReference type="GO" id="GO:0006412">
    <property type="term" value="P:translation"/>
    <property type="evidence" value="ECO:0007669"/>
    <property type="project" value="UniProtKB-UniRule"/>
</dbReference>
<dbReference type="HAMAP" id="MF_01363">
    <property type="entry name" value="Ribosomal_bL21"/>
    <property type="match status" value="1"/>
</dbReference>
<dbReference type="InterPro" id="IPR028909">
    <property type="entry name" value="bL21-like"/>
</dbReference>
<dbReference type="InterPro" id="IPR036164">
    <property type="entry name" value="bL21-like_sf"/>
</dbReference>
<dbReference type="InterPro" id="IPR001787">
    <property type="entry name" value="Ribosomal_bL21"/>
</dbReference>
<dbReference type="NCBIfam" id="TIGR00061">
    <property type="entry name" value="L21"/>
    <property type="match status" value="1"/>
</dbReference>
<dbReference type="PANTHER" id="PTHR21349">
    <property type="entry name" value="50S RIBOSOMAL PROTEIN L21"/>
    <property type="match status" value="1"/>
</dbReference>
<dbReference type="PANTHER" id="PTHR21349:SF0">
    <property type="entry name" value="LARGE RIBOSOMAL SUBUNIT PROTEIN BL21M"/>
    <property type="match status" value="1"/>
</dbReference>
<dbReference type="Pfam" id="PF00829">
    <property type="entry name" value="Ribosomal_L21p"/>
    <property type="match status" value="1"/>
</dbReference>
<dbReference type="SUPFAM" id="SSF141091">
    <property type="entry name" value="L21p-like"/>
    <property type="match status" value="1"/>
</dbReference>